<proteinExistence type="inferred from homology"/>
<sequence length="1358" mass="151564">MAYSYTEKKRIRKDFGKRPQILDVPYLLTTQLDSYRQFLQADRSEDNRQDVGLHAAFKTVFPIVSYSGTVELEYVSYRLGKPVFDVKECQLRGMTYAAPLRVLLRLVIYDKDAPAGSRVVKDIKEQEVYMGELPLMTENGTFVINGTERVIVSQLHRSPGVFFDHDKGKTHSSGKLLFNARVIPYRGSWLDFEFDPKDSVFVRIDRRRKLPATVLLRALGMETEEILATFFETNTVSITKDGFDMELIPERLRGEVAAFDFKVKNKVLVESGRRITARHVRELEAAGIKSLEVPAEYLVGKVLAHAVIDEDSGELVANANDEITDELLKKLRAAGIKSFKTLYTNDLDHGPYISTTLNIDTCRSQLEAQVEIYRMMRPGEPPTKEAAENLFNNLFFTEERYDLSAVGRMKFNRRVGREEITGPGVLDKDDILAVLKTLIDIRNGNGQVDDIDHLGNRRVRSVGEMAENVFRVGLVRVERAVKERLSVAESEGLMPQELINAKPVAAAVKEFFGSSQLSQFMDQNNPLSEVTHKRRISALGPGGLTRERAGFEVRDVHPTHYGRVCPIETPEGPNIGLINSLAVYARTNDYGFLETPYRKVENGKVTNEIVYLSAIEEGQYVIAQANASLDAKGNLVDELVSCRHANEFTMSTPDKIEFMDISPKQIVSVAAALIPFLEHDDANRALMGSNMQRQAVPCLRAETAVVGTGIERTVAIDSGSSIVARRGGVVDSVDAARIVVRVNDDETEAGEPGVDIYNLTKYTRSNQNTCINQRPLVNVGDVLARGDVLADGSSTDLGEMALGQNMMVAFMPWNGYNFEDSILISERVVQEDRFTSIHIEELTCVARDTKLGPEEISADIPNVSESLLSKLDESGIVYVGAEVKPNDILVGKVTPKGETQLTPEEKLLRAIFGEKASDVKDTSLRVPSGMEGTVIDVRVFTRDGVDKDKRALQIEEAALAAVRKDLKDQLRIYEDDIYDRVEKLLVGKLAAGGPNKLKDGTKVTKTYLTEVPREKWFEVRMRTEEVNEQLEKMAASLKEQHEAFETRFKEQKEKLTQGDDLAPGVLKMVKVYLAVKRRMQPGDKMAGRHGNKGVVSMIVPVEDMPYLEDGTPVDIVLNPLGVPSRMNVGQVLETHLGWAAKGLGQKIGRMVEAKAKIDELRKFLDKIYNHSAKKVDLSDFSDEEILKLCANLKKGVPMATPVFDGAEEEEIKAMLKLADLPESGQTTLFDGRTGESFDRPVTVGYMHMLKLNHLVDDKMHARSTGPYSLVTQQPLGGKAQFGGQRFGEMEVWALEAYGAAYTLQEMLTVKSDDVQGRNKMYKNIVDGDHRMEANIPESFNVLMKEIRSLAINIELEQD</sequence>
<name>RPOB_THISH</name>
<gene>
    <name evidence="1" type="primary">rpoB</name>
    <name type="ordered locus">Tgr7_2331</name>
</gene>
<keyword id="KW-0240">DNA-directed RNA polymerase</keyword>
<keyword id="KW-0548">Nucleotidyltransferase</keyword>
<keyword id="KW-1185">Reference proteome</keyword>
<keyword id="KW-0804">Transcription</keyword>
<keyword id="KW-0808">Transferase</keyword>
<protein>
    <recommendedName>
        <fullName evidence="1">DNA-directed RNA polymerase subunit beta</fullName>
        <shortName evidence="1">RNAP subunit beta</shortName>
        <ecNumber evidence="1">2.7.7.6</ecNumber>
    </recommendedName>
    <alternativeName>
        <fullName evidence="1">RNA polymerase subunit beta</fullName>
    </alternativeName>
    <alternativeName>
        <fullName evidence="1">Transcriptase subunit beta</fullName>
    </alternativeName>
</protein>
<reference key="1">
    <citation type="journal article" date="2011" name="Stand. Genomic Sci.">
        <title>Complete genome sequence of 'Thioalkalivibrio sulfidophilus' HL-EbGr7.</title>
        <authorList>
            <person name="Muyzer G."/>
            <person name="Sorokin D.Y."/>
            <person name="Mavromatis K."/>
            <person name="Lapidus A."/>
            <person name="Clum A."/>
            <person name="Ivanova N."/>
            <person name="Pati A."/>
            <person name="d'Haeseleer P."/>
            <person name="Woyke T."/>
            <person name="Kyrpides N.C."/>
        </authorList>
    </citation>
    <scope>NUCLEOTIDE SEQUENCE [LARGE SCALE GENOMIC DNA]</scope>
    <source>
        <strain>HL-EbGR7</strain>
    </source>
</reference>
<evidence type="ECO:0000255" key="1">
    <source>
        <dbReference type="HAMAP-Rule" id="MF_01321"/>
    </source>
</evidence>
<comment type="function">
    <text evidence="1">DNA-dependent RNA polymerase catalyzes the transcription of DNA into RNA using the four ribonucleoside triphosphates as substrates.</text>
</comment>
<comment type="catalytic activity">
    <reaction evidence="1">
        <text>RNA(n) + a ribonucleoside 5'-triphosphate = RNA(n+1) + diphosphate</text>
        <dbReference type="Rhea" id="RHEA:21248"/>
        <dbReference type="Rhea" id="RHEA-COMP:14527"/>
        <dbReference type="Rhea" id="RHEA-COMP:17342"/>
        <dbReference type="ChEBI" id="CHEBI:33019"/>
        <dbReference type="ChEBI" id="CHEBI:61557"/>
        <dbReference type="ChEBI" id="CHEBI:140395"/>
        <dbReference type="EC" id="2.7.7.6"/>
    </reaction>
</comment>
<comment type="subunit">
    <text evidence="1">The RNAP catalytic core consists of 2 alpha, 1 beta, 1 beta' and 1 omega subunit. When a sigma factor is associated with the core the holoenzyme is formed, which can initiate transcription.</text>
</comment>
<comment type="similarity">
    <text evidence="1">Belongs to the RNA polymerase beta chain family.</text>
</comment>
<dbReference type="EC" id="2.7.7.6" evidence="1"/>
<dbReference type="EMBL" id="CP001339">
    <property type="protein sequence ID" value="ACL73411.1"/>
    <property type="molecule type" value="Genomic_DNA"/>
</dbReference>
<dbReference type="RefSeq" id="WP_012638887.1">
    <property type="nucleotide sequence ID" value="NC_011901.1"/>
</dbReference>
<dbReference type="SMR" id="B8GV65"/>
<dbReference type="STRING" id="396588.Tgr7_2331"/>
<dbReference type="KEGG" id="tgr:Tgr7_2331"/>
<dbReference type="eggNOG" id="COG0085">
    <property type="taxonomic scope" value="Bacteria"/>
</dbReference>
<dbReference type="HOGENOM" id="CLU_000524_4_3_6"/>
<dbReference type="OrthoDB" id="9803954at2"/>
<dbReference type="Proteomes" id="UP000002383">
    <property type="component" value="Chromosome"/>
</dbReference>
<dbReference type="GO" id="GO:0000428">
    <property type="term" value="C:DNA-directed RNA polymerase complex"/>
    <property type="evidence" value="ECO:0007669"/>
    <property type="project" value="UniProtKB-KW"/>
</dbReference>
<dbReference type="GO" id="GO:0003677">
    <property type="term" value="F:DNA binding"/>
    <property type="evidence" value="ECO:0007669"/>
    <property type="project" value="UniProtKB-UniRule"/>
</dbReference>
<dbReference type="GO" id="GO:0003899">
    <property type="term" value="F:DNA-directed RNA polymerase activity"/>
    <property type="evidence" value="ECO:0007669"/>
    <property type="project" value="UniProtKB-UniRule"/>
</dbReference>
<dbReference type="GO" id="GO:0032549">
    <property type="term" value="F:ribonucleoside binding"/>
    <property type="evidence" value="ECO:0007669"/>
    <property type="project" value="InterPro"/>
</dbReference>
<dbReference type="GO" id="GO:0006351">
    <property type="term" value="P:DNA-templated transcription"/>
    <property type="evidence" value="ECO:0007669"/>
    <property type="project" value="UniProtKB-UniRule"/>
</dbReference>
<dbReference type="CDD" id="cd00653">
    <property type="entry name" value="RNA_pol_B_RPB2"/>
    <property type="match status" value="1"/>
</dbReference>
<dbReference type="FunFam" id="2.40.50.100:FF:000006">
    <property type="entry name" value="DNA-directed RNA polymerase subunit beta"/>
    <property type="match status" value="1"/>
</dbReference>
<dbReference type="FunFam" id="2.40.50.150:FF:000001">
    <property type="entry name" value="DNA-directed RNA polymerase subunit beta"/>
    <property type="match status" value="1"/>
</dbReference>
<dbReference type="FunFam" id="3.90.1100.10:FF:000002">
    <property type="entry name" value="DNA-directed RNA polymerase subunit beta"/>
    <property type="match status" value="1"/>
</dbReference>
<dbReference type="FunFam" id="3.90.1110.10:FF:000001">
    <property type="entry name" value="DNA-directed RNA polymerase subunit beta"/>
    <property type="match status" value="1"/>
</dbReference>
<dbReference type="FunFam" id="3.90.1110.10:FF:000004">
    <property type="entry name" value="DNA-directed RNA polymerase subunit beta"/>
    <property type="match status" value="1"/>
</dbReference>
<dbReference type="FunFam" id="3.90.1800.10:FF:000001">
    <property type="entry name" value="DNA-directed RNA polymerase subunit beta"/>
    <property type="match status" value="1"/>
</dbReference>
<dbReference type="Gene3D" id="2.40.50.100">
    <property type="match status" value="1"/>
</dbReference>
<dbReference type="Gene3D" id="2.40.50.150">
    <property type="match status" value="1"/>
</dbReference>
<dbReference type="Gene3D" id="3.90.1100.10">
    <property type="match status" value="2"/>
</dbReference>
<dbReference type="Gene3D" id="2.30.150.10">
    <property type="entry name" value="DNA-directed RNA polymerase, beta subunit, external 1 domain"/>
    <property type="match status" value="1"/>
</dbReference>
<dbReference type="Gene3D" id="2.40.270.10">
    <property type="entry name" value="DNA-directed RNA polymerase, subunit 2, domain 6"/>
    <property type="match status" value="2"/>
</dbReference>
<dbReference type="Gene3D" id="3.90.1800.10">
    <property type="entry name" value="RNA polymerase alpha subunit dimerisation domain"/>
    <property type="match status" value="1"/>
</dbReference>
<dbReference type="Gene3D" id="3.90.1110.10">
    <property type="entry name" value="RNA polymerase Rpb2, domain 2"/>
    <property type="match status" value="2"/>
</dbReference>
<dbReference type="HAMAP" id="MF_01321">
    <property type="entry name" value="RNApol_bact_RpoB"/>
    <property type="match status" value="1"/>
</dbReference>
<dbReference type="InterPro" id="IPR042107">
    <property type="entry name" value="DNA-dir_RNA_pol_bsu_ext_1_sf"/>
</dbReference>
<dbReference type="InterPro" id="IPR019462">
    <property type="entry name" value="DNA-dir_RNA_pol_bsu_external_1"/>
</dbReference>
<dbReference type="InterPro" id="IPR015712">
    <property type="entry name" value="DNA-dir_RNA_pol_su2"/>
</dbReference>
<dbReference type="InterPro" id="IPR007120">
    <property type="entry name" value="DNA-dir_RNAP_su2_dom"/>
</dbReference>
<dbReference type="InterPro" id="IPR037033">
    <property type="entry name" value="DNA-dir_RNAP_su2_hyb_sf"/>
</dbReference>
<dbReference type="InterPro" id="IPR010243">
    <property type="entry name" value="RNA_pol_bsu_bac"/>
</dbReference>
<dbReference type="InterPro" id="IPR007121">
    <property type="entry name" value="RNA_pol_bsu_CS"/>
</dbReference>
<dbReference type="InterPro" id="IPR007644">
    <property type="entry name" value="RNA_pol_bsu_protrusion"/>
</dbReference>
<dbReference type="InterPro" id="IPR007642">
    <property type="entry name" value="RNA_pol_Rpb2_2"/>
</dbReference>
<dbReference type="InterPro" id="IPR037034">
    <property type="entry name" value="RNA_pol_Rpb2_2_sf"/>
</dbReference>
<dbReference type="InterPro" id="IPR007645">
    <property type="entry name" value="RNA_pol_Rpb2_3"/>
</dbReference>
<dbReference type="InterPro" id="IPR007641">
    <property type="entry name" value="RNA_pol_Rpb2_7"/>
</dbReference>
<dbReference type="InterPro" id="IPR014724">
    <property type="entry name" value="RNA_pol_RPB2_OB-fold"/>
</dbReference>
<dbReference type="NCBIfam" id="NF001616">
    <property type="entry name" value="PRK00405.1"/>
    <property type="match status" value="1"/>
</dbReference>
<dbReference type="NCBIfam" id="TIGR02013">
    <property type="entry name" value="rpoB"/>
    <property type="match status" value="1"/>
</dbReference>
<dbReference type="PANTHER" id="PTHR20856">
    <property type="entry name" value="DNA-DIRECTED RNA POLYMERASE I SUBUNIT 2"/>
    <property type="match status" value="1"/>
</dbReference>
<dbReference type="Pfam" id="PF04563">
    <property type="entry name" value="RNA_pol_Rpb2_1"/>
    <property type="match status" value="1"/>
</dbReference>
<dbReference type="Pfam" id="PF04561">
    <property type="entry name" value="RNA_pol_Rpb2_2"/>
    <property type="match status" value="2"/>
</dbReference>
<dbReference type="Pfam" id="PF04565">
    <property type="entry name" value="RNA_pol_Rpb2_3"/>
    <property type="match status" value="1"/>
</dbReference>
<dbReference type="Pfam" id="PF10385">
    <property type="entry name" value="RNA_pol_Rpb2_45"/>
    <property type="match status" value="1"/>
</dbReference>
<dbReference type="Pfam" id="PF00562">
    <property type="entry name" value="RNA_pol_Rpb2_6"/>
    <property type="match status" value="1"/>
</dbReference>
<dbReference type="Pfam" id="PF04560">
    <property type="entry name" value="RNA_pol_Rpb2_7"/>
    <property type="match status" value="1"/>
</dbReference>
<dbReference type="SUPFAM" id="SSF64484">
    <property type="entry name" value="beta and beta-prime subunits of DNA dependent RNA-polymerase"/>
    <property type="match status" value="1"/>
</dbReference>
<dbReference type="PROSITE" id="PS01166">
    <property type="entry name" value="RNA_POL_BETA"/>
    <property type="match status" value="1"/>
</dbReference>
<accession>B8GV65</accession>
<organism>
    <name type="scientific">Thioalkalivibrio sulfidiphilus (strain HL-EbGR7)</name>
    <dbReference type="NCBI Taxonomy" id="396588"/>
    <lineage>
        <taxon>Bacteria</taxon>
        <taxon>Pseudomonadati</taxon>
        <taxon>Pseudomonadota</taxon>
        <taxon>Gammaproteobacteria</taxon>
        <taxon>Chromatiales</taxon>
        <taxon>Ectothiorhodospiraceae</taxon>
        <taxon>Thioalkalivibrio</taxon>
    </lineage>
</organism>
<feature type="chain" id="PRO_1000165832" description="DNA-directed RNA polymerase subunit beta">
    <location>
        <begin position="1"/>
        <end position="1358"/>
    </location>
</feature>